<protein>
    <recommendedName>
        <fullName evidence="1">UPF0304 protein VFMJ11_1926</fullName>
    </recommendedName>
</protein>
<evidence type="ECO:0000255" key="1">
    <source>
        <dbReference type="HAMAP-Rule" id="MF_00762"/>
    </source>
</evidence>
<feature type="chain" id="PRO_1000198347" description="UPF0304 protein VFMJ11_1926">
    <location>
        <begin position="1"/>
        <end position="166"/>
    </location>
</feature>
<sequence length="166" mass="19861">MDMTNAQRLILSNQYYLMSQMDPANAEKYKRQQLIVERGYELQIRELDKDFGCITETECREIIDFMEMYHAMQESYNMLSEECQAKVDARRLQFLGFDIATEAQQVNYVRFLTSSEGLYPQFDKADHHFNSQMPMLDKYRRMLTTWRNCPRQYHLCSTELAQIFNA</sequence>
<organism>
    <name type="scientific">Aliivibrio fischeri (strain MJ11)</name>
    <name type="common">Vibrio fischeri</name>
    <dbReference type="NCBI Taxonomy" id="388396"/>
    <lineage>
        <taxon>Bacteria</taxon>
        <taxon>Pseudomonadati</taxon>
        <taxon>Pseudomonadota</taxon>
        <taxon>Gammaproteobacteria</taxon>
        <taxon>Vibrionales</taxon>
        <taxon>Vibrionaceae</taxon>
        <taxon>Aliivibrio</taxon>
    </lineage>
</organism>
<name>Y1926_ALIFM</name>
<comment type="similarity">
    <text evidence="1">Belongs to the UPF0304 family.</text>
</comment>
<reference key="1">
    <citation type="submission" date="2008-08" db="EMBL/GenBank/DDBJ databases">
        <title>Complete sequence of Vibrio fischeri strain MJ11.</title>
        <authorList>
            <person name="Mandel M.J."/>
            <person name="Stabb E.V."/>
            <person name="Ruby E.G."/>
            <person name="Ferriera S."/>
            <person name="Johnson J."/>
            <person name="Kravitz S."/>
            <person name="Beeson K."/>
            <person name="Sutton G."/>
            <person name="Rogers Y.-H."/>
            <person name="Friedman R."/>
            <person name="Frazier M."/>
            <person name="Venter J.C."/>
        </authorList>
    </citation>
    <scope>NUCLEOTIDE SEQUENCE [LARGE SCALE GENOMIC DNA]</scope>
    <source>
        <strain>MJ11</strain>
    </source>
</reference>
<dbReference type="EMBL" id="CP001139">
    <property type="protein sequence ID" value="ACH65805.1"/>
    <property type="molecule type" value="Genomic_DNA"/>
</dbReference>
<dbReference type="RefSeq" id="WP_005420240.1">
    <property type="nucleotide sequence ID" value="NC_011184.1"/>
</dbReference>
<dbReference type="SMR" id="B5FG97"/>
<dbReference type="KEGG" id="vfm:VFMJ11_1926"/>
<dbReference type="HOGENOM" id="CLU_101021_1_0_6"/>
<dbReference type="Proteomes" id="UP000001857">
    <property type="component" value="Chromosome I"/>
</dbReference>
<dbReference type="Gene3D" id="1.10.287.680">
    <property type="entry name" value="Helix hairpin bin"/>
    <property type="match status" value="1"/>
</dbReference>
<dbReference type="Gene3D" id="1.10.3190.10">
    <property type="entry name" value="yfbu gene product, domain 2"/>
    <property type="match status" value="1"/>
</dbReference>
<dbReference type="HAMAP" id="MF_00762">
    <property type="entry name" value="UPF0304"/>
    <property type="match status" value="1"/>
</dbReference>
<dbReference type="InterPro" id="IPR005587">
    <property type="entry name" value="UPF0304_YfbU"/>
</dbReference>
<dbReference type="InterPro" id="IPR023146">
    <property type="entry name" value="YfbU_alpha-helical_sf"/>
</dbReference>
<dbReference type="InterPro" id="IPR023145">
    <property type="entry name" value="YfbU_helix-hairpin_sf"/>
</dbReference>
<dbReference type="NCBIfam" id="NF003936">
    <property type="entry name" value="PRK05445.1"/>
    <property type="match status" value="1"/>
</dbReference>
<dbReference type="Pfam" id="PF03887">
    <property type="entry name" value="YfbU"/>
    <property type="match status" value="1"/>
</dbReference>
<dbReference type="PIRSF" id="PIRSF006272">
    <property type="entry name" value="UCP006272"/>
    <property type="match status" value="1"/>
</dbReference>
<dbReference type="SUPFAM" id="SSF116960">
    <property type="entry name" value="YfbU-like"/>
    <property type="match status" value="1"/>
</dbReference>
<proteinExistence type="inferred from homology"/>
<accession>B5FG97</accession>
<gene>
    <name type="ordered locus">VFMJ11_1926</name>
</gene>